<accession>P05531</accession>
<gene>
    <name type="primary">Xlr</name>
</gene>
<comment type="tissue specificity">
    <text>Expressed in lymphoid cells.</text>
</comment>
<comment type="similarity">
    <text evidence="3">Belongs to the XLR/SYCP3 family.</text>
</comment>
<reference key="1">
    <citation type="journal article" date="1987" name="J. Exp. Med.">
        <title>Sequence analysis and expression of an X-linked, lymphocyte-regulated gene family (XLR).</title>
        <authorList>
            <person name="Siegel J.N."/>
            <person name="Turner C.A."/>
            <person name="Klinman D.M."/>
            <person name="Wilkinson M."/>
            <person name="Steinberg A.D."/>
            <person name="Macleod C.L."/>
            <person name="Paul W.E."/>
            <person name="Davis M.M."/>
            <person name="Cohen D.I."/>
        </authorList>
    </citation>
    <scope>NUCLEOTIDE SEQUENCE [MRNA]</scope>
</reference>
<reference key="2">
    <citation type="journal article" date="2004" name="Genome Res.">
        <title>The status, quality, and expansion of the NIH full-length cDNA project: the Mammalian Gene Collection (MGC).</title>
        <authorList>
            <consortium name="The MGC Project Team"/>
        </authorList>
    </citation>
    <scope>NUCLEOTIDE SEQUENCE [LARGE SCALE MRNA]</scope>
    <source>
        <strain>FVB/N</strain>
        <tissue>Mammary gland</tissue>
    </source>
</reference>
<name>XLR_MOUSE</name>
<protein>
    <recommendedName>
        <fullName>X-linked lymphocyte-regulated protein PM1</fullName>
    </recommendedName>
</protein>
<organism>
    <name type="scientific">Mus musculus</name>
    <name type="common">Mouse</name>
    <dbReference type="NCBI Taxonomy" id="10090"/>
    <lineage>
        <taxon>Eukaryota</taxon>
        <taxon>Metazoa</taxon>
        <taxon>Chordata</taxon>
        <taxon>Craniata</taxon>
        <taxon>Vertebrata</taxon>
        <taxon>Euteleostomi</taxon>
        <taxon>Mammalia</taxon>
        <taxon>Eutheria</taxon>
        <taxon>Euarchontoglires</taxon>
        <taxon>Glires</taxon>
        <taxon>Rodentia</taxon>
        <taxon>Myomorpha</taxon>
        <taxon>Muroidea</taxon>
        <taxon>Muridae</taxon>
        <taxon>Murinae</taxon>
        <taxon>Mus</taxon>
        <taxon>Mus</taxon>
    </lineage>
</organism>
<evidence type="ECO:0000255" key="1"/>
<evidence type="ECO:0000256" key="2">
    <source>
        <dbReference type="SAM" id="MobiDB-lite"/>
    </source>
</evidence>
<evidence type="ECO:0000305" key="3"/>
<keyword id="KW-0175">Coiled coil</keyword>
<keyword id="KW-1185">Reference proteome</keyword>
<dbReference type="EMBL" id="X07967">
    <property type="protein sequence ID" value="CAA30781.1"/>
    <property type="molecule type" value="mRNA"/>
</dbReference>
<dbReference type="EMBL" id="BC005560">
    <property type="protein sequence ID" value="AAH05560.1"/>
    <property type="molecule type" value="mRNA"/>
</dbReference>
<dbReference type="CCDS" id="CCDS30139.1"/>
<dbReference type="PIR" id="S01067">
    <property type="entry name" value="S01067"/>
</dbReference>
<dbReference type="RefSeq" id="NP_001278676.1">
    <property type="nucleotide sequence ID" value="NM_001291747.2"/>
</dbReference>
<dbReference type="RefSeq" id="NP_001412999.1">
    <property type="nucleotide sequence ID" value="NM_001426070.1"/>
</dbReference>
<dbReference type="RefSeq" id="NP_001413000.1">
    <property type="nucleotide sequence ID" value="NM_001426071.1"/>
</dbReference>
<dbReference type="RefSeq" id="NP_001413001.1">
    <property type="nucleotide sequence ID" value="NM_001426072.1"/>
</dbReference>
<dbReference type="RefSeq" id="NP_001413002.1">
    <property type="nucleotide sequence ID" value="NM_001426073.1"/>
</dbReference>
<dbReference type="RefSeq" id="NP_001413003.1">
    <property type="nucleotide sequence ID" value="NM_001426074.1"/>
</dbReference>
<dbReference type="RefSeq" id="NP_035855.1">
    <property type="nucleotide sequence ID" value="NM_011725.5"/>
</dbReference>
<dbReference type="RefSeq" id="XP_011247951.1">
    <property type="nucleotide sequence ID" value="XM_011249649.2"/>
</dbReference>
<dbReference type="RefSeq" id="XP_011247952.1">
    <property type="nucleotide sequence ID" value="XM_011249650.1"/>
</dbReference>
<dbReference type="RefSeq" id="XP_011247953.1">
    <property type="nucleotide sequence ID" value="XM_011249651.2"/>
</dbReference>
<dbReference type="SMR" id="P05531"/>
<dbReference type="BioGRID" id="204593">
    <property type="interactions" value="2"/>
</dbReference>
<dbReference type="FunCoup" id="P05531">
    <property type="interactions" value="38"/>
</dbReference>
<dbReference type="STRING" id="10090.ENSMUSP00000068044"/>
<dbReference type="PaxDb" id="10090-ENSMUSP00000068044"/>
<dbReference type="PeptideAtlas" id="P05531"/>
<dbReference type="ProteomicsDB" id="300187"/>
<dbReference type="Pumba" id="P05531"/>
<dbReference type="DNASU" id="22441"/>
<dbReference type="Ensembl" id="ENSMUST00000067763.10">
    <property type="protein sequence ID" value="ENSMUSP00000068044.4"/>
    <property type="gene ID" value="ENSMUSG00000054626.12"/>
</dbReference>
<dbReference type="Ensembl" id="ENSMUST00000114810.2">
    <property type="protein sequence ID" value="ENSMUSP00000110458.2"/>
    <property type="gene ID" value="ENSMUSG00000054626.12"/>
</dbReference>
<dbReference type="GeneID" id="22441"/>
<dbReference type="KEGG" id="mmu:22441"/>
<dbReference type="UCSC" id="uc009tfl.2">
    <property type="organism name" value="mouse"/>
</dbReference>
<dbReference type="AGR" id="MGI:98976"/>
<dbReference type="CTD" id="22441"/>
<dbReference type="MGI" id="MGI:98976">
    <property type="gene designation" value="Xlr"/>
</dbReference>
<dbReference type="VEuPathDB" id="HostDB:ENSMUSG00000054626"/>
<dbReference type="eggNOG" id="ENOG502R883">
    <property type="taxonomic scope" value="Eukaryota"/>
</dbReference>
<dbReference type="GeneTree" id="ENSGT00390000000062"/>
<dbReference type="HOGENOM" id="CLU_101820_2_0_1"/>
<dbReference type="InParanoid" id="P05531"/>
<dbReference type="OMA" id="VILMNAQ"/>
<dbReference type="OrthoDB" id="9621324at2759"/>
<dbReference type="PhylomeDB" id="P05531"/>
<dbReference type="TreeFam" id="TF328876"/>
<dbReference type="BioGRID-ORCS" id="22441">
    <property type="hits" value="3 hits in 44 CRISPR screens"/>
</dbReference>
<dbReference type="PRO" id="PR:P05531"/>
<dbReference type="Proteomes" id="UP000000589">
    <property type="component" value="Chromosome X"/>
</dbReference>
<dbReference type="RNAct" id="P05531">
    <property type="molecule type" value="protein"/>
</dbReference>
<dbReference type="Bgee" id="ENSMUSG00000054626">
    <property type="expression patterns" value="Expressed in placenta and 57 other cell types or tissues"/>
</dbReference>
<dbReference type="ExpressionAtlas" id="P05531">
    <property type="expression patterns" value="baseline and differential"/>
</dbReference>
<dbReference type="InterPro" id="IPR051443">
    <property type="entry name" value="XLR/SYCP3"/>
</dbReference>
<dbReference type="InterPro" id="IPR006888">
    <property type="entry name" value="XLR/SYCP3/FAM9_dom"/>
</dbReference>
<dbReference type="PANTHER" id="PTHR19368:SF10">
    <property type="entry name" value="EG546282 PROTEIN-RELATED"/>
    <property type="match status" value="1"/>
</dbReference>
<dbReference type="PANTHER" id="PTHR19368">
    <property type="entry name" value="XLR/SCP3/FAM9"/>
    <property type="match status" value="1"/>
</dbReference>
<dbReference type="Pfam" id="PF04803">
    <property type="entry name" value="Cor1"/>
    <property type="match status" value="1"/>
</dbReference>
<sequence length="208" mass="24613">MENWDLSSDEMQDGNAPELDVIEEHNPVTRDDENANPEEVVGDTRSPVQNILGKFEGDINKRLHIKRKRMETYIKDSFKDSNVKLEQLWKTNKQERKKINNKFCEQYITTFQKFDMDVQKFNEEQEKSVNNYQKEQQALKLSKCSQSQTLEAIKDMHENYMEGLMNLETNNYNMLFDVDGELRKEMSVFKKDLMKHTLKYSSSFPSSD</sequence>
<proteinExistence type="evidence at transcript level"/>
<feature type="chain" id="PRO_0000223040" description="X-linked lymphocyte-regulated protein PM1">
    <location>
        <begin position="1"/>
        <end position="208"/>
    </location>
</feature>
<feature type="region of interest" description="Disordered" evidence="2">
    <location>
        <begin position="1"/>
        <end position="43"/>
    </location>
</feature>
<feature type="coiled-coil region" evidence="1">
    <location>
        <begin position="122"/>
        <end position="143"/>
    </location>
</feature>
<feature type="compositionally biased region" description="Basic and acidic residues" evidence="2">
    <location>
        <begin position="22"/>
        <end position="33"/>
    </location>
</feature>